<sequence>MPTPKKGPRLASSPAHERLMLANMATSLFQNGRITTTLPKAKRLRPLAERLITLAKRGDLHNRRRVMRVIRNKSVVHKLFTEIAEQMEQREGGYTRIVKIAPRRGDAAPAAIIELVTEPVSPKQAVVKEAEAATKVAAAEAPEAAAEEATAENAE</sequence>
<evidence type="ECO:0000255" key="1">
    <source>
        <dbReference type="HAMAP-Rule" id="MF_01368"/>
    </source>
</evidence>
<evidence type="ECO:0000305" key="2"/>
<protein>
    <recommendedName>
        <fullName evidence="1">Large ribosomal subunit protein bL17</fullName>
    </recommendedName>
    <alternativeName>
        <fullName evidence="2">50S ribosomal protein L17</fullName>
    </alternativeName>
</protein>
<feature type="chain" id="PRO_1000055773" description="Large ribosomal subunit protein bL17">
    <location>
        <begin position="1"/>
        <end position="155"/>
    </location>
</feature>
<proteinExistence type="inferred from homology"/>
<gene>
    <name evidence="1" type="primary">rplQ</name>
    <name type="ordered locus">BAD_0348</name>
</gene>
<organism>
    <name type="scientific">Bifidobacterium adolescentis (strain ATCC 15703 / DSM 20083 / NCTC 11814 / E194a)</name>
    <dbReference type="NCBI Taxonomy" id="367928"/>
    <lineage>
        <taxon>Bacteria</taxon>
        <taxon>Bacillati</taxon>
        <taxon>Actinomycetota</taxon>
        <taxon>Actinomycetes</taxon>
        <taxon>Bifidobacteriales</taxon>
        <taxon>Bifidobacteriaceae</taxon>
        <taxon>Bifidobacterium</taxon>
    </lineage>
</organism>
<reference key="1">
    <citation type="submission" date="2006-12" db="EMBL/GenBank/DDBJ databases">
        <title>Bifidobacterium adolescentis complete genome sequence.</title>
        <authorList>
            <person name="Suzuki T."/>
            <person name="Tsuda Y."/>
            <person name="Kanou N."/>
            <person name="Inoue T."/>
            <person name="Kumazaki K."/>
            <person name="Nagano S."/>
            <person name="Hirai S."/>
            <person name="Tanaka K."/>
            <person name="Watanabe K."/>
        </authorList>
    </citation>
    <scope>NUCLEOTIDE SEQUENCE [LARGE SCALE GENOMIC DNA]</scope>
    <source>
        <strain>ATCC 15703 / DSM 20083 / NCTC 11814 / E194a</strain>
    </source>
</reference>
<accession>A1A096</accession>
<comment type="subunit">
    <text evidence="1">Part of the 50S ribosomal subunit. Contacts protein L32.</text>
</comment>
<comment type="similarity">
    <text evidence="1">Belongs to the bacterial ribosomal protein bL17 family.</text>
</comment>
<name>RL17_BIFAA</name>
<keyword id="KW-1185">Reference proteome</keyword>
<keyword id="KW-0687">Ribonucleoprotein</keyword>
<keyword id="KW-0689">Ribosomal protein</keyword>
<dbReference type="EMBL" id="AP009256">
    <property type="protein sequence ID" value="BAF39129.1"/>
    <property type="molecule type" value="Genomic_DNA"/>
</dbReference>
<dbReference type="RefSeq" id="WP_011742830.1">
    <property type="nucleotide sequence ID" value="NZ_CAXVNC010000001.1"/>
</dbReference>
<dbReference type="SMR" id="A1A096"/>
<dbReference type="STRING" id="367928.BAD_0348"/>
<dbReference type="PaxDb" id="1680-BADO_0355"/>
<dbReference type="GeneID" id="4556490"/>
<dbReference type="KEGG" id="bad:BAD_0348"/>
<dbReference type="HOGENOM" id="CLU_074407_0_0_11"/>
<dbReference type="Proteomes" id="UP000008702">
    <property type="component" value="Chromosome"/>
</dbReference>
<dbReference type="GO" id="GO:0022625">
    <property type="term" value="C:cytosolic large ribosomal subunit"/>
    <property type="evidence" value="ECO:0007669"/>
    <property type="project" value="TreeGrafter"/>
</dbReference>
<dbReference type="GO" id="GO:0003735">
    <property type="term" value="F:structural constituent of ribosome"/>
    <property type="evidence" value="ECO:0007669"/>
    <property type="project" value="InterPro"/>
</dbReference>
<dbReference type="GO" id="GO:0006412">
    <property type="term" value="P:translation"/>
    <property type="evidence" value="ECO:0007669"/>
    <property type="project" value="UniProtKB-UniRule"/>
</dbReference>
<dbReference type="FunFam" id="3.90.1030.10:FF:000001">
    <property type="entry name" value="50S ribosomal protein L17"/>
    <property type="match status" value="1"/>
</dbReference>
<dbReference type="Gene3D" id="3.90.1030.10">
    <property type="entry name" value="Ribosomal protein L17"/>
    <property type="match status" value="1"/>
</dbReference>
<dbReference type="HAMAP" id="MF_01368">
    <property type="entry name" value="Ribosomal_bL17"/>
    <property type="match status" value="1"/>
</dbReference>
<dbReference type="InterPro" id="IPR000456">
    <property type="entry name" value="Ribosomal_bL17"/>
</dbReference>
<dbReference type="InterPro" id="IPR047859">
    <property type="entry name" value="Ribosomal_bL17_CS"/>
</dbReference>
<dbReference type="InterPro" id="IPR036373">
    <property type="entry name" value="Ribosomal_bL17_sf"/>
</dbReference>
<dbReference type="NCBIfam" id="TIGR00059">
    <property type="entry name" value="L17"/>
    <property type="match status" value="1"/>
</dbReference>
<dbReference type="PANTHER" id="PTHR14413:SF16">
    <property type="entry name" value="LARGE RIBOSOMAL SUBUNIT PROTEIN BL17M"/>
    <property type="match status" value="1"/>
</dbReference>
<dbReference type="PANTHER" id="PTHR14413">
    <property type="entry name" value="RIBOSOMAL PROTEIN L17"/>
    <property type="match status" value="1"/>
</dbReference>
<dbReference type="Pfam" id="PF01196">
    <property type="entry name" value="Ribosomal_L17"/>
    <property type="match status" value="1"/>
</dbReference>
<dbReference type="SUPFAM" id="SSF64263">
    <property type="entry name" value="Prokaryotic ribosomal protein L17"/>
    <property type="match status" value="1"/>
</dbReference>
<dbReference type="PROSITE" id="PS01167">
    <property type="entry name" value="RIBOSOMAL_L17"/>
    <property type="match status" value="1"/>
</dbReference>